<name>TATA_RICRS</name>
<dbReference type="EMBL" id="CP000848">
    <property type="protein sequence ID" value="ABV76729.1"/>
    <property type="molecule type" value="Genomic_DNA"/>
</dbReference>
<dbReference type="RefSeq" id="WP_004997483.1">
    <property type="nucleotide sequence ID" value="NZ_CP121767.1"/>
</dbReference>
<dbReference type="SMR" id="A8GTK4"/>
<dbReference type="KEGG" id="rri:A1G_06380"/>
<dbReference type="HOGENOM" id="CLU_086034_6_2_5"/>
<dbReference type="Proteomes" id="UP000006832">
    <property type="component" value="Chromosome"/>
</dbReference>
<dbReference type="GO" id="GO:0033281">
    <property type="term" value="C:TAT protein transport complex"/>
    <property type="evidence" value="ECO:0007669"/>
    <property type="project" value="UniProtKB-UniRule"/>
</dbReference>
<dbReference type="GO" id="GO:0008320">
    <property type="term" value="F:protein transmembrane transporter activity"/>
    <property type="evidence" value="ECO:0007669"/>
    <property type="project" value="UniProtKB-UniRule"/>
</dbReference>
<dbReference type="GO" id="GO:0043953">
    <property type="term" value="P:protein transport by the Tat complex"/>
    <property type="evidence" value="ECO:0007669"/>
    <property type="project" value="UniProtKB-UniRule"/>
</dbReference>
<dbReference type="Gene3D" id="1.20.5.3310">
    <property type="match status" value="1"/>
</dbReference>
<dbReference type="HAMAP" id="MF_00236">
    <property type="entry name" value="TatA_E"/>
    <property type="match status" value="1"/>
</dbReference>
<dbReference type="InterPro" id="IPR003369">
    <property type="entry name" value="TatA/B/E"/>
</dbReference>
<dbReference type="InterPro" id="IPR006312">
    <property type="entry name" value="TatA/E"/>
</dbReference>
<dbReference type="NCBIfam" id="NF002402">
    <property type="entry name" value="PRK01470.1"/>
    <property type="match status" value="1"/>
</dbReference>
<dbReference type="NCBIfam" id="TIGR01411">
    <property type="entry name" value="tatAE"/>
    <property type="match status" value="1"/>
</dbReference>
<dbReference type="PANTHER" id="PTHR42982">
    <property type="entry name" value="SEC-INDEPENDENT PROTEIN TRANSLOCASE PROTEIN TATA"/>
    <property type="match status" value="1"/>
</dbReference>
<dbReference type="PANTHER" id="PTHR42982:SF1">
    <property type="entry name" value="SEC-INDEPENDENT PROTEIN TRANSLOCASE PROTEIN TATA"/>
    <property type="match status" value="1"/>
</dbReference>
<dbReference type="Pfam" id="PF02416">
    <property type="entry name" value="TatA_B_E"/>
    <property type="match status" value="1"/>
</dbReference>
<protein>
    <recommendedName>
        <fullName evidence="1">Sec-independent protein translocase protein TatA</fullName>
    </recommendedName>
</protein>
<feature type="chain" id="PRO_1000058967" description="Sec-independent protein translocase protein TatA">
    <location>
        <begin position="1"/>
        <end position="53"/>
    </location>
</feature>
<feature type="transmembrane region" description="Helical" evidence="1">
    <location>
        <begin position="1"/>
        <end position="21"/>
    </location>
</feature>
<accession>A8GTK4</accession>
<organism>
    <name type="scientific">Rickettsia rickettsii (strain Sheila Smith)</name>
    <dbReference type="NCBI Taxonomy" id="392021"/>
    <lineage>
        <taxon>Bacteria</taxon>
        <taxon>Pseudomonadati</taxon>
        <taxon>Pseudomonadota</taxon>
        <taxon>Alphaproteobacteria</taxon>
        <taxon>Rickettsiales</taxon>
        <taxon>Rickettsiaceae</taxon>
        <taxon>Rickettsieae</taxon>
        <taxon>Rickettsia</taxon>
        <taxon>spotted fever group</taxon>
    </lineage>
</organism>
<gene>
    <name evidence="1" type="primary">tatA</name>
    <name type="ordered locus">A1G_06380</name>
</gene>
<proteinExistence type="inferred from homology"/>
<reference key="1">
    <citation type="submission" date="2007-09" db="EMBL/GenBank/DDBJ databases">
        <title>Complete genome sequence of Rickettsia rickettsii.</title>
        <authorList>
            <person name="Madan A."/>
            <person name="Fahey J."/>
            <person name="Helton E."/>
            <person name="Ketteman M."/>
            <person name="Madan A."/>
            <person name="Rodrigues S."/>
            <person name="Sanchez A."/>
            <person name="Dasch G."/>
            <person name="Eremeeva M."/>
        </authorList>
    </citation>
    <scope>NUCLEOTIDE SEQUENCE [LARGE SCALE GENOMIC DNA]</scope>
    <source>
        <strain>Sheila Smith</strain>
    </source>
</reference>
<sequence>MGMSFSHLLIVLLIIFVLFGAGKLPQVMSDLAKGLKAFKDGMKDDGSDNDKNK</sequence>
<keyword id="KW-0997">Cell inner membrane</keyword>
<keyword id="KW-1003">Cell membrane</keyword>
<keyword id="KW-0472">Membrane</keyword>
<keyword id="KW-0653">Protein transport</keyword>
<keyword id="KW-0811">Translocation</keyword>
<keyword id="KW-0812">Transmembrane</keyword>
<keyword id="KW-1133">Transmembrane helix</keyword>
<keyword id="KW-0813">Transport</keyword>
<comment type="function">
    <text evidence="1">Part of the twin-arginine translocation (Tat) system that transports large folded proteins containing a characteristic twin-arginine motif in their signal peptide across membranes. TatA could form the protein-conducting channel of the Tat system.</text>
</comment>
<comment type="subunit">
    <text evidence="1">The Tat system comprises two distinct complexes: a TatABC complex, containing multiple copies of TatA, TatB and TatC subunits, and a separate TatA complex, containing only TatA subunits. Substrates initially bind to the TatABC complex, which probably triggers association of the separate TatA complex to form the active translocon.</text>
</comment>
<comment type="subcellular location">
    <subcellularLocation>
        <location evidence="1">Cell inner membrane</location>
        <topology evidence="1">Single-pass membrane protein</topology>
    </subcellularLocation>
</comment>
<comment type="similarity">
    <text evidence="1">Belongs to the TatA/E family.</text>
</comment>
<evidence type="ECO:0000255" key="1">
    <source>
        <dbReference type="HAMAP-Rule" id="MF_00236"/>
    </source>
</evidence>